<organism>
    <name type="scientific">Methanopyrus kandleri (strain AV19 / DSM 6324 / JCM 9639 / NBRC 100938)</name>
    <dbReference type="NCBI Taxonomy" id="190192"/>
    <lineage>
        <taxon>Archaea</taxon>
        <taxon>Methanobacteriati</taxon>
        <taxon>Methanobacteriota</taxon>
        <taxon>Methanomada group</taxon>
        <taxon>Methanopyri</taxon>
        <taxon>Methanopyrales</taxon>
        <taxon>Methanopyraceae</taxon>
        <taxon>Methanopyrus</taxon>
    </lineage>
</organism>
<gene>
    <name evidence="1" type="primary">leuS</name>
    <name type="ordered locus">MK1364</name>
</gene>
<proteinExistence type="inferred from homology"/>
<sequence length="943" mass="108672">MAERPEERQWKEWEEAGLFEADPDDRESVYITVAYPYPSGSMHVGHARTYLVPDIYARFKRMQGYNVLFPMAFHVTGTPVVGIAERIKEGDEDTIRLYRDLYGVPEEELEKFTEPEAIVEYFAREYEENMKRMGYSIDWRRKFTTVDPEYRSFITWQYLRLREKGLVDKGEHPVRYCPHCENPVGDHDLLEGEDATIEELTLVKFPVEGDDLILVAATFRPETLYGATNVWVKPDEEYLVVEVDGERWVVSEEAYRNLRHQKDGVEKVDTVRGEELIGESVVNPVTGEALPVLPAEFIDPKFGTGVVYSVPAHAPADAAALEDLKKDPSVLEEYGVDPSVVEELEPVQVIEVEGYGEFPAYDALEEHGIESQTDPELEKATQEVYRAELHKGVMVVDEFEGTPVREAREEIKSRLIESGDADVMYDFSEKPVICRCGTECVVRILKDQWFLRYSDGEWKERAEELLGRMEIVPEEVRANFEDTIEWLDDWACARRVGLGTPLPWDPDWIVEPLSDSTVYMAYYTIAHRLKGKGELPPEVFDYVFLGEGDPEEIAEKAGLDVEELEAMREEFEYWYPLNWRLSAKDLVTNHLTFFIFHHAALFPEDKWPKGIVVFGMGLLEGQKMSSSKGNVVLLSEALDEYGPDVVRLFLATSAEPWQDFDWRDEYVRGVQRHLERFETLIRDHADESVEDKDAVDRWFLHEFREVVEETTEALEGFQIRRAYNRAFYGVMKLLREYEAMKGHVKILGEIAEDWLKLLHPVIPFATDRLWREVLGEDSFLLEEEWPDPSEYPEEPELSVAKEVLDRLIEDVRDVEKVIGAEPGYTLHVYLAPEWQWRALELILKDKEFGEVMSELMKDEGLREKGDEVAKIVQELTKEDLPEDVDVDALREALTEFLEAAGRALTDKTGASEVVIHTDPEEAPGPEDRKAGARPLRPGIWLEE</sequence>
<feature type="chain" id="PRO_0000152132" description="Leucine--tRNA ligase">
    <location>
        <begin position="1"/>
        <end position="943"/>
    </location>
</feature>
<feature type="region of interest" description="Disordered" evidence="2">
    <location>
        <begin position="910"/>
        <end position="943"/>
    </location>
</feature>
<feature type="short sequence motif" description="'HIGH' region">
    <location>
        <begin position="36"/>
        <end position="46"/>
    </location>
</feature>
<feature type="short sequence motif" description="'KMSKS' region">
    <location>
        <begin position="623"/>
        <end position="627"/>
    </location>
</feature>
<feature type="compositionally biased region" description="Basic and acidic residues" evidence="2">
    <location>
        <begin position="915"/>
        <end position="930"/>
    </location>
</feature>
<comment type="catalytic activity">
    <reaction evidence="1">
        <text>tRNA(Leu) + L-leucine + ATP = L-leucyl-tRNA(Leu) + AMP + diphosphate</text>
        <dbReference type="Rhea" id="RHEA:11688"/>
        <dbReference type="Rhea" id="RHEA-COMP:9613"/>
        <dbReference type="Rhea" id="RHEA-COMP:9622"/>
        <dbReference type="ChEBI" id="CHEBI:30616"/>
        <dbReference type="ChEBI" id="CHEBI:33019"/>
        <dbReference type="ChEBI" id="CHEBI:57427"/>
        <dbReference type="ChEBI" id="CHEBI:78442"/>
        <dbReference type="ChEBI" id="CHEBI:78494"/>
        <dbReference type="ChEBI" id="CHEBI:456215"/>
        <dbReference type="EC" id="6.1.1.4"/>
    </reaction>
</comment>
<comment type="subcellular location">
    <subcellularLocation>
        <location evidence="1">Cytoplasm</location>
    </subcellularLocation>
</comment>
<comment type="similarity">
    <text evidence="1">Belongs to the class-I aminoacyl-tRNA synthetase family.</text>
</comment>
<keyword id="KW-0030">Aminoacyl-tRNA synthetase</keyword>
<keyword id="KW-0067">ATP-binding</keyword>
<keyword id="KW-0963">Cytoplasm</keyword>
<keyword id="KW-0436">Ligase</keyword>
<keyword id="KW-0547">Nucleotide-binding</keyword>
<keyword id="KW-0648">Protein biosynthesis</keyword>
<keyword id="KW-1185">Reference proteome</keyword>
<evidence type="ECO:0000255" key="1">
    <source>
        <dbReference type="HAMAP-Rule" id="MF_00049"/>
    </source>
</evidence>
<evidence type="ECO:0000256" key="2">
    <source>
        <dbReference type="SAM" id="MobiDB-lite"/>
    </source>
</evidence>
<reference key="1">
    <citation type="journal article" date="2002" name="Proc. Natl. Acad. Sci. U.S.A.">
        <title>The complete genome of hyperthermophile Methanopyrus kandleri AV19 and monophyly of archaeal methanogens.</title>
        <authorList>
            <person name="Slesarev A.I."/>
            <person name="Mezhevaya K.V."/>
            <person name="Makarova K.S."/>
            <person name="Polushin N.N."/>
            <person name="Shcherbinina O.V."/>
            <person name="Shakhova V.V."/>
            <person name="Belova G.I."/>
            <person name="Aravind L."/>
            <person name="Natale D.A."/>
            <person name="Rogozin I.B."/>
            <person name="Tatusov R.L."/>
            <person name="Wolf Y.I."/>
            <person name="Stetter K.O."/>
            <person name="Malykh A.G."/>
            <person name="Koonin E.V."/>
            <person name="Kozyavkin S.A."/>
        </authorList>
    </citation>
    <scope>NUCLEOTIDE SEQUENCE [LARGE SCALE GENOMIC DNA]</scope>
    <source>
        <strain>AV19 / DSM 6324 / JCM 9639 / NBRC 100938</strain>
    </source>
</reference>
<protein>
    <recommendedName>
        <fullName evidence="1">Leucine--tRNA ligase</fullName>
        <ecNumber evidence="1">6.1.1.4</ecNumber>
    </recommendedName>
    <alternativeName>
        <fullName evidence="1">Leucyl-tRNA synthetase</fullName>
        <shortName evidence="1">LeuRS</shortName>
    </alternativeName>
</protein>
<name>SYL_METKA</name>
<accession>Q8TVM4</accession>
<dbReference type="EC" id="6.1.1.4" evidence="1"/>
<dbReference type="EMBL" id="AE009439">
    <property type="protein sequence ID" value="AAM02577.1"/>
    <property type="molecule type" value="Genomic_DNA"/>
</dbReference>
<dbReference type="RefSeq" id="WP_011019732.1">
    <property type="nucleotide sequence ID" value="NC_003551.1"/>
</dbReference>
<dbReference type="SMR" id="Q8TVM4"/>
<dbReference type="FunCoup" id="Q8TVM4">
    <property type="interactions" value="201"/>
</dbReference>
<dbReference type="STRING" id="190192.MK1364"/>
<dbReference type="PaxDb" id="190192-MK1364"/>
<dbReference type="EnsemblBacteria" id="AAM02577">
    <property type="protein sequence ID" value="AAM02577"/>
    <property type="gene ID" value="MK1364"/>
</dbReference>
<dbReference type="GeneID" id="1477959"/>
<dbReference type="KEGG" id="mka:MK1364"/>
<dbReference type="PATRIC" id="fig|190192.8.peg.1516"/>
<dbReference type="HOGENOM" id="CLU_004174_0_0_2"/>
<dbReference type="InParanoid" id="Q8TVM4"/>
<dbReference type="OrthoDB" id="23906at2157"/>
<dbReference type="Proteomes" id="UP000001826">
    <property type="component" value="Chromosome"/>
</dbReference>
<dbReference type="GO" id="GO:0005737">
    <property type="term" value="C:cytoplasm"/>
    <property type="evidence" value="ECO:0007669"/>
    <property type="project" value="UniProtKB-SubCell"/>
</dbReference>
<dbReference type="GO" id="GO:0002161">
    <property type="term" value="F:aminoacyl-tRNA deacylase activity"/>
    <property type="evidence" value="ECO:0007669"/>
    <property type="project" value="InterPro"/>
</dbReference>
<dbReference type="GO" id="GO:0005524">
    <property type="term" value="F:ATP binding"/>
    <property type="evidence" value="ECO:0007669"/>
    <property type="project" value="UniProtKB-UniRule"/>
</dbReference>
<dbReference type="GO" id="GO:0004823">
    <property type="term" value="F:leucine-tRNA ligase activity"/>
    <property type="evidence" value="ECO:0007669"/>
    <property type="project" value="UniProtKB-UniRule"/>
</dbReference>
<dbReference type="GO" id="GO:0006429">
    <property type="term" value="P:leucyl-tRNA aminoacylation"/>
    <property type="evidence" value="ECO:0007669"/>
    <property type="project" value="UniProtKB-UniRule"/>
</dbReference>
<dbReference type="CDD" id="cd00812">
    <property type="entry name" value="LeuRS_core"/>
    <property type="match status" value="1"/>
</dbReference>
<dbReference type="Gene3D" id="3.30.2320.20">
    <property type="entry name" value="Class I aminoacyl-tRNA synthetases (RS)"/>
    <property type="match status" value="1"/>
</dbReference>
<dbReference type="Gene3D" id="3.40.50.620">
    <property type="entry name" value="HUPs"/>
    <property type="match status" value="1"/>
</dbReference>
<dbReference type="Gene3D" id="1.10.730.10">
    <property type="entry name" value="Isoleucyl-tRNA Synthetase, Domain 1"/>
    <property type="match status" value="1"/>
</dbReference>
<dbReference type="Gene3D" id="1.10.10.720">
    <property type="entry name" value="leucyl-tRNA synthetase"/>
    <property type="match status" value="1"/>
</dbReference>
<dbReference type="Gene3D" id="3.90.740.10">
    <property type="entry name" value="Valyl/Leucyl/Isoleucyl-tRNA synthetase, editing domain"/>
    <property type="match status" value="1"/>
</dbReference>
<dbReference type="HAMAP" id="MF_00049_A">
    <property type="entry name" value="Leu_tRNA_synth_A"/>
    <property type="match status" value="1"/>
</dbReference>
<dbReference type="InterPro" id="IPR001412">
    <property type="entry name" value="aa-tRNA-synth_I_CS"/>
</dbReference>
<dbReference type="InterPro" id="IPR002300">
    <property type="entry name" value="aa-tRNA-synth_Ia"/>
</dbReference>
<dbReference type="InterPro" id="IPR020791">
    <property type="entry name" value="Leu-tRNA-lgase_arc"/>
</dbReference>
<dbReference type="InterPro" id="IPR004493">
    <property type="entry name" value="Leu-tRNA-synth_Ia_arc/euk"/>
</dbReference>
<dbReference type="InterPro" id="IPR013155">
    <property type="entry name" value="M/V/L/I-tRNA-synth_anticd-bd"/>
</dbReference>
<dbReference type="InterPro" id="IPR015413">
    <property type="entry name" value="Methionyl/Leucyl_tRNA_Synth"/>
</dbReference>
<dbReference type="InterPro" id="IPR014729">
    <property type="entry name" value="Rossmann-like_a/b/a_fold"/>
</dbReference>
<dbReference type="InterPro" id="IPR009080">
    <property type="entry name" value="tRNAsynth_Ia_anticodon-bd"/>
</dbReference>
<dbReference type="InterPro" id="IPR009008">
    <property type="entry name" value="Val/Leu/Ile-tRNA-synth_edit"/>
</dbReference>
<dbReference type="NCBIfam" id="TIGR00395">
    <property type="entry name" value="leuS_arch"/>
    <property type="match status" value="1"/>
</dbReference>
<dbReference type="NCBIfam" id="NF008957">
    <property type="entry name" value="PRK12300.1"/>
    <property type="match status" value="1"/>
</dbReference>
<dbReference type="PANTHER" id="PTHR45794:SF1">
    <property type="entry name" value="LEUCINE--TRNA LIGASE, CYTOPLASMIC"/>
    <property type="match status" value="1"/>
</dbReference>
<dbReference type="PANTHER" id="PTHR45794">
    <property type="entry name" value="LEUCYL-TRNA SYNTHETASE"/>
    <property type="match status" value="1"/>
</dbReference>
<dbReference type="Pfam" id="PF08264">
    <property type="entry name" value="Anticodon_1"/>
    <property type="match status" value="1"/>
</dbReference>
<dbReference type="Pfam" id="PF00133">
    <property type="entry name" value="tRNA-synt_1"/>
    <property type="match status" value="1"/>
</dbReference>
<dbReference type="Pfam" id="PF09334">
    <property type="entry name" value="tRNA-synt_1g"/>
    <property type="match status" value="1"/>
</dbReference>
<dbReference type="SUPFAM" id="SSF47323">
    <property type="entry name" value="Anticodon-binding domain of a subclass of class I aminoacyl-tRNA synthetases"/>
    <property type="match status" value="1"/>
</dbReference>
<dbReference type="SUPFAM" id="SSF52374">
    <property type="entry name" value="Nucleotidylyl transferase"/>
    <property type="match status" value="1"/>
</dbReference>
<dbReference type="SUPFAM" id="SSF50677">
    <property type="entry name" value="ValRS/IleRS/LeuRS editing domain"/>
    <property type="match status" value="1"/>
</dbReference>
<dbReference type="PROSITE" id="PS00178">
    <property type="entry name" value="AA_TRNA_LIGASE_I"/>
    <property type="match status" value="1"/>
</dbReference>